<proteinExistence type="inferred from homology"/>
<accession>Q0KE19</accession>
<organism>
    <name type="scientific">Cupriavidus necator (strain ATCC 17699 / DSM 428 / KCTC 22496 / NCIMB 10442 / H16 / Stanier 337)</name>
    <name type="common">Ralstonia eutropha</name>
    <dbReference type="NCBI Taxonomy" id="381666"/>
    <lineage>
        <taxon>Bacteria</taxon>
        <taxon>Pseudomonadati</taxon>
        <taxon>Pseudomonadota</taxon>
        <taxon>Betaproteobacteria</taxon>
        <taxon>Burkholderiales</taxon>
        <taxon>Burkholderiaceae</taxon>
        <taxon>Cupriavidus</taxon>
    </lineage>
</organism>
<protein>
    <recommendedName>
        <fullName evidence="1">3-deoxy-manno-octulosonate cytidylyltransferase</fullName>
        <ecNumber evidence="1">2.7.7.38</ecNumber>
    </recommendedName>
    <alternativeName>
        <fullName evidence="1">CMP-2-keto-3-deoxyoctulosonic acid synthase</fullName>
        <shortName evidence="1">CKS</shortName>
        <shortName evidence="1">CMP-KDO synthase</shortName>
    </alternativeName>
</protein>
<reference key="1">
    <citation type="journal article" date="2006" name="Nat. Biotechnol.">
        <title>Genome sequence of the bioplastic-producing 'Knallgas' bacterium Ralstonia eutropha H16.</title>
        <authorList>
            <person name="Pohlmann A."/>
            <person name="Fricke W.F."/>
            <person name="Reinecke F."/>
            <person name="Kusian B."/>
            <person name="Liesegang H."/>
            <person name="Cramm R."/>
            <person name="Eitinger T."/>
            <person name="Ewering C."/>
            <person name="Poetter M."/>
            <person name="Schwartz E."/>
            <person name="Strittmatter A."/>
            <person name="Voss I."/>
            <person name="Gottschalk G."/>
            <person name="Steinbuechel A."/>
            <person name="Friedrich B."/>
            <person name="Bowien B."/>
        </authorList>
    </citation>
    <scope>NUCLEOTIDE SEQUENCE [LARGE SCALE GENOMIC DNA]</scope>
    <source>
        <strain>ATCC 17699 / DSM 428 / KCTC 22496 / NCIMB 10442 / H16 / Stanier 337</strain>
    </source>
</reference>
<dbReference type="EC" id="2.7.7.38" evidence="1"/>
<dbReference type="EMBL" id="AM260479">
    <property type="protein sequence ID" value="CAJ91752.1"/>
    <property type="molecule type" value="Genomic_DNA"/>
</dbReference>
<dbReference type="RefSeq" id="WP_010812254.1">
    <property type="nucleotide sequence ID" value="NZ_CP039287.1"/>
</dbReference>
<dbReference type="SMR" id="Q0KE19"/>
<dbReference type="STRING" id="381666.H16_A0604"/>
<dbReference type="KEGG" id="reh:H16_A0604"/>
<dbReference type="eggNOG" id="COG1212">
    <property type="taxonomic scope" value="Bacteria"/>
</dbReference>
<dbReference type="HOGENOM" id="CLU_065038_1_0_4"/>
<dbReference type="OrthoDB" id="9815559at2"/>
<dbReference type="UniPathway" id="UPA00030"/>
<dbReference type="UniPathway" id="UPA00358">
    <property type="reaction ID" value="UER00476"/>
</dbReference>
<dbReference type="Proteomes" id="UP000008210">
    <property type="component" value="Chromosome 1"/>
</dbReference>
<dbReference type="GO" id="GO:0005829">
    <property type="term" value="C:cytosol"/>
    <property type="evidence" value="ECO:0007669"/>
    <property type="project" value="TreeGrafter"/>
</dbReference>
<dbReference type="GO" id="GO:0008690">
    <property type="term" value="F:3-deoxy-manno-octulosonate cytidylyltransferase activity"/>
    <property type="evidence" value="ECO:0007669"/>
    <property type="project" value="UniProtKB-UniRule"/>
</dbReference>
<dbReference type="GO" id="GO:0033468">
    <property type="term" value="P:CMP-keto-3-deoxy-D-manno-octulosonic acid biosynthetic process"/>
    <property type="evidence" value="ECO:0007669"/>
    <property type="project" value="UniProtKB-UniRule"/>
</dbReference>
<dbReference type="GO" id="GO:0009103">
    <property type="term" value="P:lipopolysaccharide biosynthetic process"/>
    <property type="evidence" value="ECO:0007669"/>
    <property type="project" value="UniProtKB-UniRule"/>
</dbReference>
<dbReference type="CDD" id="cd02517">
    <property type="entry name" value="CMP-KDO-Synthetase"/>
    <property type="match status" value="1"/>
</dbReference>
<dbReference type="FunFam" id="3.90.550.10:FF:000011">
    <property type="entry name" value="3-deoxy-manno-octulosonate cytidylyltransferase"/>
    <property type="match status" value="1"/>
</dbReference>
<dbReference type="Gene3D" id="3.90.550.10">
    <property type="entry name" value="Spore Coat Polysaccharide Biosynthesis Protein SpsA, Chain A"/>
    <property type="match status" value="1"/>
</dbReference>
<dbReference type="HAMAP" id="MF_00057">
    <property type="entry name" value="KdsB"/>
    <property type="match status" value="1"/>
</dbReference>
<dbReference type="InterPro" id="IPR003329">
    <property type="entry name" value="Cytidylyl_trans"/>
</dbReference>
<dbReference type="InterPro" id="IPR004528">
    <property type="entry name" value="KdsB"/>
</dbReference>
<dbReference type="InterPro" id="IPR029044">
    <property type="entry name" value="Nucleotide-diphossugar_trans"/>
</dbReference>
<dbReference type="NCBIfam" id="TIGR00466">
    <property type="entry name" value="kdsB"/>
    <property type="match status" value="1"/>
</dbReference>
<dbReference type="NCBIfam" id="NF003952">
    <property type="entry name" value="PRK05450.1-5"/>
    <property type="match status" value="1"/>
</dbReference>
<dbReference type="NCBIfam" id="NF009905">
    <property type="entry name" value="PRK13368.1"/>
    <property type="match status" value="1"/>
</dbReference>
<dbReference type="PANTHER" id="PTHR42866">
    <property type="entry name" value="3-DEOXY-MANNO-OCTULOSONATE CYTIDYLYLTRANSFERASE"/>
    <property type="match status" value="1"/>
</dbReference>
<dbReference type="PANTHER" id="PTHR42866:SF2">
    <property type="entry name" value="3-DEOXY-MANNO-OCTULOSONATE CYTIDYLYLTRANSFERASE, MITOCHONDRIAL"/>
    <property type="match status" value="1"/>
</dbReference>
<dbReference type="Pfam" id="PF02348">
    <property type="entry name" value="CTP_transf_3"/>
    <property type="match status" value="1"/>
</dbReference>
<dbReference type="SUPFAM" id="SSF53448">
    <property type="entry name" value="Nucleotide-diphospho-sugar transferases"/>
    <property type="match status" value="1"/>
</dbReference>
<name>KDSB_CUPNH</name>
<keyword id="KW-0963">Cytoplasm</keyword>
<keyword id="KW-0448">Lipopolysaccharide biosynthesis</keyword>
<keyword id="KW-0548">Nucleotidyltransferase</keyword>
<keyword id="KW-1185">Reference proteome</keyword>
<keyword id="KW-0808">Transferase</keyword>
<feature type="chain" id="PRO_0000370125" description="3-deoxy-manno-octulosonate cytidylyltransferase">
    <location>
        <begin position="1"/>
        <end position="269"/>
    </location>
</feature>
<sequence length="269" mass="28385">MTVPAFTVVIPARLASTRLPDKPLADIGGRPMIVRVAERAHASSAQRTVVATDAPAVAQACAAHGIEAVLTRADHPSGTDRLSEVAAQLGLADDAIVVNVQGDEPLIEPSLIDEVALHLAHHADCAIATAAHPLQDIAEVFNPNVVKVVCDAAGRALYFSRAPIPWARDAWSGVPAVPAALAQVPLPGMPVLRHIGLYAYRAGFLRRFPTLAAAPLEQTEALEQLRAMWHGERIAVLQTSAAPAPGVDTPADLERVRALWAQSMAQEGP</sequence>
<evidence type="ECO:0000255" key="1">
    <source>
        <dbReference type="HAMAP-Rule" id="MF_00057"/>
    </source>
</evidence>
<gene>
    <name evidence="1" type="primary">kdsB</name>
    <name type="ordered locus">H16_A0604</name>
</gene>
<comment type="function">
    <text evidence="1">Activates KDO (a required 8-carbon sugar) for incorporation into bacterial lipopolysaccharide in Gram-negative bacteria.</text>
</comment>
<comment type="catalytic activity">
    <reaction evidence="1">
        <text>3-deoxy-alpha-D-manno-oct-2-ulosonate + CTP = CMP-3-deoxy-beta-D-manno-octulosonate + diphosphate</text>
        <dbReference type="Rhea" id="RHEA:23448"/>
        <dbReference type="ChEBI" id="CHEBI:33019"/>
        <dbReference type="ChEBI" id="CHEBI:37563"/>
        <dbReference type="ChEBI" id="CHEBI:85986"/>
        <dbReference type="ChEBI" id="CHEBI:85987"/>
        <dbReference type="EC" id="2.7.7.38"/>
    </reaction>
</comment>
<comment type="pathway">
    <text evidence="1">Nucleotide-sugar biosynthesis; CMP-3-deoxy-D-manno-octulosonate biosynthesis; CMP-3-deoxy-D-manno-octulosonate from 3-deoxy-D-manno-octulosonate and CTP: step 1/1.</text>
</comment>
<comment type="pathway">
    <text evidence="1">Bacterial outer membrane biogenesis; lipopolysaccharide biosynthesis.</text>
</comment>
<comment type="subcellular location">
    <subcellularLocation>
        <location evidence="1">Cytoplasm</location>
    </subcellularLocation>
</comment>
<comment type="similarity">
    <text evidence="1">Belongs to the KdsB family.</text>
</comment>